<sequence length="513" mass="57204">MSVELWQQCVELLRDELPAQQFNTWIRPLQVEAEGDELRVYAPNRFVLDWVNEKYLGRVLELLDEHGNGMAPVLSLLIGSKRSSAPRAAPNAPLAAAASQALQAAAANAAPAAAPAPAPAPTSAPAKKAAAQKAAEVSEEPSRDSFDPMAGASSQQAPVRAEQRTVQVEGALKHTSYLNRTFTFENFVEGKSNQLARAAAWQVADNPKHGYNPLFLYGGVGLGKTHLMHAVGNHLLKKNPNAKVVYLHSERFVADMVKALQLNAINEFKRFYRSVDALLIDDIQFFARKERSQEEFFHTFNALLEGGQQVILTSDRYPKEIEGLEERLKSRFGWGLTVAVEPPELETRVAILMKKADQAKVELPHDAAFFIAQRIRSNVRELEGALKRVIAHSHFMGRDITIELIRESLKDLLALQDKLVSVDNIQRTVAEYYKIKISDLLSKRRSRSVARPRQVAMALSKELTNHSLPEIGDVFGGRDHTTVLHACRKINELKESDADIREDYKNLLRTLTT</sequence>
<feature type="chain" id="PRO_1000048694" description="Chromosomal replication initiator protein DnaA">
    <location>
        <begin position="1"/>
        <end position="513"/>
    </location>
</feature>
<feature type="region of interest" description="Domain I, interacts with DnaA modulators" evidence="1">
    <location>
        <begin position="1"/>
        <end position="87"/>
    </location>
</feature>
<feature type="region of interest" description="Domain II" evidence="1">
    <location>
        <begin position="87"/>
        <end position="176"/>
    </location>
</feature>
<feature type="region of interest" description="Disordered" evidence="2">
    <location>
        <begin position="113"/>
        <end position="163"/>
    </location>
</feature>
<feature type="region of interest" description="Domain III, AAA+ region" evidence="1">
    <location>
        <begin position="177"/>
        <end position="393"/>
    </location>
</feature>
<feature type="region of interest" description="Domain IV, binds dsDNA" evidence="1">
    <location>
        <begin position="394"/>
        <end position="513"/>
    </location>
</feature>
<feature type="compositionally biased region" description="Low complexity" evidence="2">
    <location>
        <begin position="123"/>
        <end position="135"/>
    </location>
</feature>
<feature type="binding site" evidence="1">
    <location>
        <position position="221"/>
    </location>
    <ligand>
        <name>ATP</name>
        <dbReference type="ChEBI" id="CHEBI:30616"/>
    </ligand>
</feature>
<feature type="binding site" evidence="1">
    <location>
        <position position="223"/>
    </location>
    <ligand>
        <name>ATP</name>
        <dbReference type="ChEBI" id="CHEBI:30616"/>
    </ligand>
</feature>
<feature type="binding site" evidence="1">
    <location>
        <position position="224"/>
    </location>
    <ligand>
        <name>ATP</name>
        <dbReference type="ChEBI" id="CHEBI:30616"/>
    </ligand>
</feature>
<feature type="binding site" evidence="1">
    <location>
        <position position="225"/>
    </location>
    <ligand>
        <name>ATP</name>
        <dbReference type="ChEBI" id="CHEBI:30616"/>
    </ligand>
</feature>
<keyword id="KW-0067">ATP-binding</keyword>
<keyword id="KW-0963">Cytoplasm</keyword>
<keyword id="KW-0235">DNA replication</keyword>
<keyword id="KW-0238">DNA-binding</keyword>
<keyword id="KW-0446">Lipid-binding</keyword>
<keyword id="KW-0547">Nucleotide-binding</keyword>
<dbReference type="EMBL" id="CP000076">
    <property type="protein sequence ID" value="AAY95419.1"/>
    <property type="molecule type" value="Genomic_DNA"/>
</dbReference>
<dbReference type="RefSeq" id="WP_011058391.1">
    <property type="nucleotide sequence ID" value="NC_004129.6"/>
</dbReference>
<dbReference type="SMR" id="Q4KKT0"/>
<dbReference type="STRING" id="220664.PFL_0001"/>
<dbReference type="GeneID" id="57472972"/>
<dbReference type="KEGG" id="pfl:PFL_0001"/>
<dbReference type="PATRIC" id="fig|220664.5.peg.1"/>
<dbReference type="eggNOG" id="COG0593">
    <property type="taxonomic scope" value="Bacteria"/>
</dbReference>
<dbReference type="HOGENOM" id="CLU_026910_0_1_6"/>
<dbReference type="Proteomes" id="UP000008540">
    <property type="component" value="Chromosome"/>
</dbReference>
<dbReference type="GO" id="GO:0005737">
    <property type="term" value="C:cytoplasm"/>
    <property type="evidence" value="ECO:0007669"/>
    <property type="project" value="UniProtKB-SubCell"/>
</dbReference>
<dbReference type="GO" id="GO:0005886">
    <property type="term" value="C:plasma membrane"/>
    <property type="evidence" value="ECO:0007669"/>
    <property type="project" value="TreeGrafter"/>
</dbReference>
<dbReference type="GO" id="GO:0005524">
    <property type="term" value="F:ATP binding"/>
    <property type="evidence" value="ECO:0007669"/>
    <property type="project" value="UniProtKB-UniRule"/>
</dbReference>
<dbReference type="GO" id="GO:0016887">
    <property type="term" value="F:ATP hydrolysis activity"/>
    <property type="evidence" value="ECO:0007669"/>
    <property type="project" value="InterPro"/>
</dbReference>
<dbReference type="GO" id="GO:0003688">
    <property type="term" value="F:DNA replication origin binding"/>
    <property type="evidence" value="ECO:0007669"/>
    <property type="project" value="UniProtKB-UniRule"/>
</dbReference>
<dbReference type="GO" id="GO:0008289">
    <property type="term" value="F:lipid binding"/>
    <property type="evidence" value="ECO:0007669"/>
    <property type="project" value="UniProtKB-KW"/>
</dbReference>
<dbReference type="GO" id="GO:0006270">
    <property type="term" value="P:DNA replication initiation"/>
    <property type="evidence" value="ECO:0007669"/>
    <property type="project" value="UniProtKB-UniRule"/>
</dbReference>
<dbReference type="GO" id="GO:0006275">
    <property type="term" value="P:regulation of DNA replication"/>
    <property type="evidence" value="ECO:0007669"/>
    <property type="project" value="UniProtKB-UniRule"/>
</dbReference>
<dbReference type="CDD" id="cd00009">
    <property type="entry name" value="AAA"/>
    <property type="match status" value="1"/>
</dbReference>
<dbReference type="CDD" id="cd06571">
    <property type="entry name" value="Bac_DnaA_C"/>
    <property type="match status" value="1"/>
</dbReference>
<dbReference type="FunFam" id="1.10.1750.10:FF:000001">
    <property type="entry name" value="Chromosomal replication initiator protein DnaA"/>
    <property type="match status" value="1"/>
</dbReference>
<dbReference type="FunFam" id="1.10.8.60:FF:000003">
    <property type="entry name" value="Chromosomal replication initiator protein DnaA"/>
    <property type="match status" value="1"/>
</dbReference>
<dbReference type="FunFam" id="3.40.50.300:FF:000103">
    <property type="entry name" value="Chromosomal replication initiator protein DnaA"/>
    <property type="match status" value="1"/>
</dbReference>
<dbReference type="Gene3D" id="1.10.1750.10">
    <property type="match status" value="1"/>
</dbReference>
<dbReference type="Gene3D" id="1.10.8.60">
    <property type="match status" value="1"/>
</dbReference>
<dbReference type="Gene3D" id="3.30.300.180">
    <property type="match status" value="1"/>
</dbReference>
<dbReference type="Gene3D" id="3.40.50.300">
    <property type="entry name" value="P-loop containing nucleotide triphosphate hydrolases"/>
    <property type="match status" value="1"/>
</dbReference>
<dbReference type="HAMAP" id="MF_00377">
    <property type="entry name" value="DnaA_bact"/>
    <property type="match status" value="1"/>
</dbReference>
<dbReference type="InterPro" id="IPR003593">
    <property type="entry name" value="AAA+_ATPase"/>
</dbReference>
<dbReference type="InterPro" id="IPR001957">
    <property type="entry name" value="Chromosome_initiator_DnaA"/>
</dbReference>
<dbReference type="InterPro" id="IPR020591">
    <property type="entry name" value="Chromosome_initiator_DnaA-like"/>
</dbReference>
<dbReference type="InterPro" id="IPR018312">
    <property type="entry name" value="Chromosome_initiator_DnaA_CS"/>
</dbReference>
<dbReference type="InterPro" id="IPR013159">
    <property type="entry name" value="DnaA_C"/>
</dbReference>
<dbReference type="InterPro" id="IPR013317">
    <property type="entry name" value="DnaA_dom"/>
</dbReference>
<dbReference type="InterPro" id="IPR024633">
    <property type="entry name" value="DnaA_N_dom"/>
</dbReference>
<dbReference type="InterPro" id="IPR038454">
    <property type="entry name" value="DnaA_N_sf"/>
</dbReference>
<dbReference type="InterPro" id="IPR027417">
    <property type="entry name" value="P-loop_NTPase"/>
</dbReference>
<dbReference type="InterPro" id="IPR010921">
    <property type="entry name" value="Trp_repressor/repl_initiator"/>
</dbReference>
<dbReference type="NCBIfam" id="TIGR00362">
    <property type="entry name" value="DnaA"/>
    <property type="match status" value="1"/>
</dbReference>
<dbReference type="PANTHER" id="PTHR30050">
    <property type="entry name" value="CHROMOSOMAL REPLICATION INITIATOR PROTEIN DNAA"/>
    <property type="match status" value="1"/>
</dbReference>
<dbReference type="PANTHER" id="PTHR30050:SF2">
    <property type="entry name" value="CHROMOSOMAL REPLICATION INITIATOR PROTEIN DNAA"/>
    <property type="match status" value="1"/>
</dbReference>
<dbReference type="Pfam" id="PF00308">
    <property type="entry name" value="Bac_DnaA"/>
    <property type="match status" value="1"/>
</dbReference>
<dbReference type="Pfam" id="PF08299">
    <property type="entry name" value="Bac_DnaA_C"/>
    <property type="match status" value="1"/>
</dbReference>
<dbReference type="Pfam" id="PF11638">
    <property type="entry name" value="DnaA_N"/>
    <property type="match status" value="1"/>
</dbReference>
<dbReference type="PRINTS" id="PR00051">
    <property type="entry name" value="DNAA"/>
</dbReference>
<dbReference type="SMART" id="SM00382">
    <property type="entry name" value="AAA"/>
    <property type="match status" value="1"/>
</dbReference>
<dbReference type="SMART" id="SM00760">
    <property type="entry name" value="Bac_DnaA_C"/>
    <property type="match status" value="1"/>
</dbReference>
<dbReference type="SUPFAM" id="SSF52540">
    <property type="entry name" value="P-loop containing nucleoside triphosphate hydrolases"/>
    <property type="match status" value="1"/>
</dbReference>
<dbReference type="SUPFAM" id="SSF48295">
    <property type="entry name" value="TrpR-like"/>
    <property type="match status" value="1"/>
</dbReference>
<dbReference type="PROSITE" id="PS01008">
    <property type="entry name" value="DNAA"/>
    <property type="match status" value="1"/>
</dbReference>
<name>DNAA_PSEF5</name>
<evidence type="ECO:0000255" key="1">
    <source>
        <dbReference type="HAMAP-Rule" id="MF_00377"/>
    </source>
</evidence>
<evidence type="ECO:0000256" key="2">
    <source>
        <dbReference type="SAM" id="MobiDB-lite"/>
    </source>
</evidence>
<accession>Q4KKT0</accession>
<protein>
    <recommendedName>
        <fullName evidence="1">Chromosomal replication initiator protein DnaA</fullName>
    </recommendedName>
</protein>
<proteinExistence type="inferred from homology"/>
<comment type="function">
    <text evidence="1">Plays an essential role in the initiation and regulation of chromosomal replication. ATP-DnaA binds to the origin of replication (oriC) to initiate formation of the DNA replication initiation complex once per cell cycle. Binds the DnaA box (a 9 base pair repeat at the origin) and separates the double-stranded (ds)DNA. Forms a right-handed helical filament on oriC DNA; dsDNA binds to the exterior of the filament while single-stranded (ss)DNA is stabiized in the filament's interior. The ATP-DnaA-oriC complex binds and stabilizes one strand of the AT-rich DNA unwinding element (DUE), permitting loading of DNA polymerase. After initiation quickly degrades to an ADP-DnaA complex that is not apt for DNA replication. Binds acidic phospholipids.</text>
</comment>
<comment type="subunit">
    <text evidence="1">Oligomerizes as a right-handed, spiral filament on DNA at oriC.</text>
</comment>
<comment type="subcellular location">
    <subcellularLocation>
        <location evidence="1">Cytoplasm</location>
    </subcellularLocation>
</comment>
<comment type="domain">
    <text evidence="1">Domain I is involved in oligomerization and binding regulators, domain II is flexibile and of varying length in different bacteria, domain III forms the AAA+ region, while domain IV binds dsDNA.</text>
</comment>
<comment type="similarity">
    <text evidence="1">Belongs to the DnaA family.</text>
</comment>
<reference key="1">
    <citation type="journal article" date="2005" name="Nat. Biotechnol.">
        <title>Complete genome sequence of the plant commensal Pseudomonas fluorescens Pf-5.</title>
        <authorList>
            <person name="Paulsen I.T."/>
            <person name="Press C.M."/>
            <person name="Ravel J."/>
            <person name="Kobayashi D.Y."/>
            <person name="Myers G.S.A."/>
            <person name="Mavrodi D.V."/>
            <person name="DeBoy R.T."/>
            <person name="Seshadri R."/>
            <person name="Ren Q."/>
            <person name="Madupu R."/>
            <person name="Dodson R.J."/>
            <person name="Durkin A.S."/>
            <person name="Brinkac L.M."/>
            <person name="Daugherty S.C."/>
            <person name="Sullivan S.A."/>
            <person name="Rosovitz M.J."/>
            <person name="Gwinn M.L."/>
            <person name="Zhou L."/>
            <person name="Schneider D.J."/>
            <person name="Cartinhour S.W."/>
            <person name="Nelson W.C."/>
            <person name="Weidman J."/>
            <person name="Watkins K."/>
            <person name="Tran K."/>
            <person name="Khouri H."/>
            <person name="Pierson E.A."/>
            <person name="Pierson L.S. III"/>
            <person name="Thomashow L.S."/>
            <person name="Loper J.E."/>
        </authorList>
    </citation>
    <scope>NUCLEOTIDE SEQUENCE [LARGE SCALE GENOMIC DNA]</scope>
    <source>
        <strain>ATCC BAA-477 / NRRL B-23932 / Pf-5</strain>
    </source>
</reference>
<organism>
    <name type="scientific">Pseudomonas fluorescens (strain ATCC BAA-477 / NRRL B-23932 / Pf-5)</name>
    <dbReference type="NCBI Taxonomy" id="220664"/>
    <lineage>
        <taxon>Bacteria</taxon>
        <taxon>Pseudomonadati</taxon>
        <taxon>Pseudomonadota</taxon>
        <taxon>Gammaproteobacteria</taxon>
        <taxon>Pseudomonadales</taxon>
        <taxon>Pseudomonadaceae</taxon>
        <taxon>Pseudomonas</taxon>
    </lineage>
</organism>
<gene>
    <name evidence="1" type="primary">dnaA</name>
    <name type="ordered locus">PFL_0001</name>
</gene>